<name>SGF11_YEAS7</name>
<keyword id="KW-0010">Activator</keyword>
<keyword id="KW-0156">Chromatin regulator</keyword>
<keyword id="KW-0479">Metal-binding</keyword>
<keyword id="KW-0539">Nucleus</keyword>
<keyword id="KW-0804">Transcription</keyword>
<keyword id="KW-0805">Transcription regulation</keyword>
<keyword id="KW-0862">Zinc</keyword>
<keyword id="KW-0863">Zinc-finger</keyword>
<feature type="chain" id="PRO_0000367545" description="SAGA-associated factor 11">
    <location>
        <begin position="1"/>
        <end position="99"/>
    </location>
</feature>
<feature type="zinc finger region" description="SGF11-type" evidence="1">
    <location>
        <begin position="71"/>
        <end position="92"/>
    </location>
</feature>
<dbReference type="EMBL" id="AAFW02000135">
    <property type="protein sequence ID" value="EDN61093.1"/>
    <property type="molecule type" value="Genomic_DNA"/>
</dbReference>
<dbReference type="BMRB" id="A6ZWK1"/>
<dbReference type="SMR" id="A6ZWK1"/>
<dbReference type="HOGENOM" id="CLU_2320099_0_0_1"/>
<dbReference type="EvolutionaryTrace" id="A6ZWK1"/>
<dbReference type="Proteomes" id="UP000007060">
    <property type="component" value="Unassembled WGS sequence"/>
</dbReference>
<dbReference type="GO" id="GO:0071819">
    <property type="term" value="C:DUBm complex"/>
    <property type="evidence" value="ECO:0007669"/>
    <property type="project" value="UniProtKB-UniRule"/>
</dbReference>
<dbReference type="GO" id="GO:0000124">
    <property type="term" value="C:SAGA complex"/>
    <property type="evidence" value="ECO:0007669"/>
    <property type="project" value="UniProtKB-UniRule"/>
</dbReference>
<dbReference type="GO" id="GO:0003713">
    <property type="term" value="F:transcription coactivator activity"/>
    <property type="evidence" value="ECO:0007669"/>
    <property type="project" value="UniProtKB-UniRule"/>
</dbReference>
<dbReference type="GO" id="GO:0008270">
    <property type="term" value="F:zinc ion binding"/>
    <property type="evidence" value="ECO:0007669"/>
    <property type="project" value="UniProtKB-UniRule"/>
</dbReference>
<dbReference type="GO" id="GO:0006325">
    <property type="term" value="P:chromatin organization"/>
    <property type="evidence" value="ECO:0007669"/>
    <property type="project" value="UniProtKB-KW"/>
</dbReference>
<dbReference type="FunFam" id="3.30.160.60:FF:000118">
    <property type="entry name" value="Ataxin-7-like protein 3"/>
    <property type="match status" value="1"/>
</dbReference>
<dbReference type="FunFam" id="1.10.287.210:FF:000006">
    <property type="entry name" value="SAGA-associated factor 11"/>
    <property type="match status" value="1"/>
</dbReference>
<dbReference type="Gene3D" id="1.10.287.210">
    <property type="match status" value="1"/>
</dbReference>
<dbReference type="Gene3D" id="3.30.160.60">
    <property type="entry name" value="Classic Zinc Finger"/>
    <property type="match status" value="1"/>
</dbReference>
<dbReference type="HAMAP" id="MF_03047">
    <property type="entry name" value="Sgf11"/>
    <property type="match status" value="1"/>
</dbReference>
<dbReference type="InterPro" id="IPR013246">
    <property type="entry name" value="SAGA_su_Sgf11"/>
</dbReference>
<dbReference type="InterPro" id="IPR041216">
    <property type="entry name" value="Sgf11_N"/>
</dbReference>
<dbReference type="Pfam" id="PF08209">
    <property type="entry name" value="Sgf11"/>
    <property type="match status" value="1"/>
</dbReference>
<dbReference type="Pfam" id="PF18519">
    <property type="entry name" value="Sgf11_N"/>
    <property type="match status" value="1"/>
</dbReference>
<proteinExistence type="inferred from homology"/>
<sequence>MTEETITIDSISNGILNNLLTTLIQDIVARETTQQQLLKTRYPDLRSYYFDPNGSLDINGLQKQQESSQYIHCENCGRDVSANRLAAHLQRCLSRGARR</sequence>
<gene>
    <name evidence="1" type="primary">SGF11</name>
    <name type="ORF">SCY_5678</name>
</gene>
<reference key="1">
    <citation type="journal article" date="2007" name="Proc. Natl. Acad. Sci. U.S.A.">
        <title>Genome sequencing and comparative analysis of Saccharomyces cerevisiae strain YJM789.</title>
        <authorList>
            <person name="Wei W."/>
            <person name="McCusker J.H."/>
            <person name="Hyman R.W."/>
            <person name="Jones T."/>
            <person name="Ning Y."/>
            <person name="Cao Z."/>
            <person name="Gu Z."/>
            <person name="Bruno D."/>
            <person name="Miranda M."/>
            <person name="Nguyen M."/>
            <person name="Wilhelmy J."/>
            <person name="Komp C."/>
            <person name="Tamse R."/>
            <person name="Wang X."/>
            <person name="Jia P."/>
            <person name="Luedi P."/>
            <person name="Oefner P.J."/>
            <person name="David L."/>
            <person name="Dietrich F.S."/>
            <person name="Li Y."/>
            <person name="Davis R.W."/>
            <person name="Steinmetz L.M."/>
        </authorList>
    </citation>
    <scope>NUCLEOTIDE SEQUENCE [LARGE SCALE GENOMIC DNA]</scope>
    <source>
        <strain>YJM789</strain>
    </source>
</reference>
<protein>
    <recommendedName>
        <fullName evidence="1">SAGA-associated factor 11</fullName>
    </recommendedName>
</protein>
<comment type="function">
    <text evidence="1">Functions as a component of the transcription regulatory histone acetylation (HAT) complex SAGA. At the promoters, SAGA is required for recruitment of the basal transcription machinery. It influences RNA polymerase II transcriptional activity through different activities such as TBP interaction and promoter selectivity, interaction with transcription activators, and chromatin modification through histone acetylation and deubiquitination. SAGA acetylates nucleosomal histone H3 to some extent (to form H3K9ac, H3K14ac, H3K18ac and H3K23ac). SAGA interacts with DNA via upstream activating sequences (UASs). Involved in transcriptional regulation of a subset of SAGA-regulated genes. Within the SAGA complex, participates in a subcomplex, that specifically deubiquitinates histones H2B.</text>
</comment>
<comment type="subunit">
    <text evidence="1">Component of the 1.8 MDa SAGA transcription coactivator-HAT complex. SAGA is built of 5 distinct domains with specialized functions. Within the SAGA complex, SUS1, SGF11, SGF73 and UBP8 form an additional subcomplex of SAGA called the DUB module (deubiquitination module). Interacts directly with SGF73, SUS1 and UBP8.</text>
</comment>
<comment type="subcellular location">
    <subcellularLocation>
        <location evidence="1">Nucleus</location>
    </subcellularLocation>
</comment>
<comment type="domain">
    <text evidence="1">The long N-terminal helix forms part of the 'assembly lobe' of the SAGA deubiquitination module.</text>
</comment>
<comment type="domain">
    <text evidence="1">The C-terminal SGF11-type zinc-finger domain together with the C-terminal catalytic domain of UBP8 forms the 'catalytic lobe' of the SAGA deubiquitination module.</text>
</comment>
<comment type="similarity">
    <text evidence="1">Belongs to the SGF11 family.</text>
</comment>
<accession>A6ZWK1</accession>
<evidence type="ECO:0000255" key="1">
    <source>
        <dbReference type="HAMAP-Rule" id="MF_03047"/>
    </source>
</evidence>
<organism>
    <name type="scientific">Saccharomyces cerevisiae (strain YJM789)</name>
    <name type="common">Baker's yeast</name>
    <dbReference type="NCBI Taxonomy" id="307796"/>
    <lineage>
        <taxon>Eukaryota</taxon>
        <taxon>Fungi</taxon>
        <taxon>Dikarya</taxon>
        <taxon>Ascomycota</taxon>
        <taxon>Saccharomycotina</taxon>
        <taxon>Saccharomycetes</taxon>
        <taxon>Saccharomycetales</taxon>
        <taxon>Saccharomycetaceae</taxon>
        <taxon>Saccharomyces</taxon>
    </lineage>
</organism>